<evidence type="ECO:0000250" key="1">
    <source>
        <dbReference type="UniProtKB" id="P35734"/>
    </source>
</evidence>
<evidence type="ECO:0000250" key="2">
    <source>
        <dbReference type="UniProtKB" id="Q9P6S5"/>
    </source>
</evidence>
<evidence type="ECO:0000256" key="3">
    <source>
        <dbReference type="SAM" id="MobiDB-lite"/>
    </source>
</evidence>
<evidence type="ECO:0000305" key="4"/>
<gene>
    <name type="primary">ASK1</name>
    <name type="ordered locus">KLLA0C12617g</name>
</gene>
<name>ASK1_KLULA</name>
<proteinExistence type="inferred from homology"/>
<protein>
    <recommendedName>
        <fullName>DASH complex subunit ASK1</fullName>
    </recommendedName>
    <alternativeName>
        <fullName>Associated with spindles and kinetochores protein 1</fullName>
    </alternativeName>
    <alternativeName>
        <fullName>Outer kinetochore protein ASK1</fullName>
    </alternativeName>
</protein>
<accession>Q6CTH8</accession>
<organism>
    <name type="scientific">Kluyveromyces lactis (strain ATCC 8585 / CBS 2359 / DSM 70799 / NBRC 1267 / NRRL Y-1140 / WM37)</name>
    <name type="common">Yeast</name>
    <name type="synonym">Candida sphaerica</name>
    <dbReference type="NCBI Taxonomy" id="284590"/>
    <lineage>
        <taxon>Eukaryota</taxon>
        <taxon>Fungi</taxon>
        <taxon>Dikarya</taxon>
        <taxon>Ascomycota</taxon>
        <taxon>Saccharomycotina</taxon>
        <taxon>Saccharomycetes</taxon>
        <taxon>Saccharomycetales</taxon>
        <taxon>Saccharomycetaceae</taxon>
        <taxon>Kluyveromyces</taxon>
    </lineage>
</organism>
<feature type="chain" id="PRO_0000211315" description="DASH complex subunit ASK1">
    <location>
        <begin position="1"/>
        <end position="218"/>
    </location>
</feature>
<feature type="region of interest" description="Disordered" evidence="3">
    <location>
        <begin position="109"/>
        <end position="218"/>
    </location>
</feature>
<feature type="compositionally biased region" description="Polar residues" evidence="3">
    <location>
        <begin position="109"/>
        <end position="131"/>
    </location>
</feature>
<feature type="compositionally biased region" description="Polar residues" evidence="3">
    <location>
        <begin position="172"/>
        <end position="181"/>
    </location>
</feature>
<feature type="compositionally biased region" description="Low complexity" evidence="3">
    <location>
        <begin position="182"/>
        <end position="193"/>
    </location>
</feature>
<dbReference type="EMBL" id="CR382123">
    <property type="protein sequence ID" value="CAH01612.1"/>
    <property type="molecule type" value="Genomic_DNA"/>
</dbReference>
<dbReference type="RefSeq" id="XP_452761.1">
    <property type="nucleotide sequence ID" value="XM_452761.1"/>
</dbReference>
<dbReference type="SMR" id="Q6CTH8"/>
<dbReference type="STRING" id="284590.Q6CTH8"/>
<dbReference type="PaxDb" id="284590-Q6CTH8"/>
<dbReference type="KEGG" id="kla:KLLA0_C12617g"/>
<dbReference type="eggNOG" id="ENOG502S2V2">
    <property type="taxonomic scope" value="Eukaryota"/>
</dbReference>
<dbReference type="HOGENOM" id="CLU_090087_0_0_1"/>
<dbReference type="InParanoid" id="Q6CTH8"/>
<dbReference type="OMA" id="EICERIM"/>
<dbReference type="Proteomes" id="UP000000598">
    <property type="component" value="Chromosome C"/>
</dbReference>
<dbReference type="GO" id="GO:0005737">
    <property type="term" value="C:cytoplasm"/>
    <property type="evidence" value="ECO:0007669"/>
    <property type="project" value="UniProtKB-KW"/>
</dbReference>
<dbReference type="GO" id="GO:0042729">
    <property type="term" value="C:DASH complex"/>
    <property type="evidence" value="ECO:0000250"/>
    <property type="project" value="UniProtKB"/>
</dbReference>
<dbReference type="GO" id="GO:0005874">
    <property type="term" value="C:microtubule"/>
    <property type="evidence" value="ECO:0007669"/>
    <property type="project" value="UniProtKB-KW"/>
</dbReference>
<dbReference type="GO" id="GO:0072686">
    <property type="term" value="C:mitotic spindle"/>
    <property type="evidence" value="ECO:0007669"/>
    <property type="project" value="InterPro"/>
</dbReference>
<dbReference type="GO" id="GO:0044732">
    <property type="term" value="C:mitotic spindle pole body"/>
    <property type="evidence" value="ECO:0007669"/>
    <property type="project" value="TreeGrafter"/>
</dbReference>
<dbReference type="GO" id="GO:0051301">
    <property type="term" value="P:cell division"/>
    <property type="evidence" value="ECO:0007669"/>
    <property type="project" value="UniProtKB-KW"/>
</dbReference>
<dbReference type="GO" id="GO:1990758">
    <property type="term" value="P:mitotic sister chromatid biorientation"/>
    <property type="evidence" value="ECO:0000250"/>
    <property type="project" value="UniProtKB"/>
</dbReference>
<dbReference type="GO" id="GO:1990976">
    <property type="term" value="P:protein transport along microtubule to mitotic spindle pole body"/>
    <property type="evidence" value="ECO:0000250"/>
    <property type="project" value="UniProtKB"/>
</dbReference>
<dbReference type="InterPro" id="IPR013964">
    <property type="entry name" value="DASH_Ask1"/>
</dbReference>
<dbReference type="PANTHER" id="PTHR28200">
    <property type="entry name" value="DASH COMPLEX SUBUNIT ASK1"/>
    <property type="match status" value="1"/>
</dbReference>
<dbReference type="PANTHER" id="PTHR28200:SF1">
    <property type="entry name" value="DASH COMPLEX SUBUNIT ASK1"/>
    <property type="match status" value="1"/>
</dbReference>
<dbReference type="Pfam" id="PF08655">
    <property type="entry name" value="DASH_Ask1"/>
    <property type="match status" value="1"/>
</dbReference>
<keyword id="KW-0131">Cell cycle</keyword>
<keyword id="KW-0132">Cell division</keyword>
<keyword id="KW-0137">Centromere</keyword>
<keyword id="KW-0158">Chromosome</keyword>
<keyword id="KW-0159">Chromosome partition</keyword>
<keyword id="KW-0963">Cytoplasm</keyword>
<keyword id="KW-0206">Cytoskeleton</keyword>
<keyword id="KW-0995">Kinetochore</keyword>
<keyword id="KW-0493">Microtubule</keyword>
<keyword id="KW-0498">Mitosis</keyword>
<keyword id="KW-0539">Nucleus</keyword>
<keyword id="KW-1185">Reference proteome</keyword>
<reference key="1">
    <citation type="journal article" date="2004" name="Nature">
        <title>Genome evolution in yeasts.</title>
        <authorList>
            <person name="Dujon B."/>
            <person name="Sherman D."/>
            <person name="Fischer G."/>
            <person name="Durrens P."/>
            <person name="Casaregola S."/>
            <person name="Lafontaine I."/>
            <person name="de Montigny J."/>
            <person name="Marck C."/>
            <person name="Neuveglise C."/>
            <person name="Talla E."/>
            <person name="Goffard N."/>
            <person name="Frangeul L."/>
            <person name="Aigle M."/>
            <person name="Anthouard V."/>
            <person name="Babour A."/>
            <person name="Barbe V."/>
            <person name="Barnay S."/>
            <person name="Blanchin S."/>
            <person name="Beckerich J.-M."/>
            <person name="Beyne E."/>
            <person name="Bleykasten C."/>
            <person name="Boisrame A."/>
            <person name="Boyer J."/>
            <person name="Cattolico L."/>
            <person name="Confanioleri F."/>
            <person name="de Daruvar A."/>
            <person name="Despons L."/>
            <person name="Fabre E."/>
            <person name="Fairhead C."/>
            <person name="Ferry-Dumazet H."/>
            <person name="Groppi A."/>
            <person name="Hantraye F."/>
            <person name="Hennequin C."/>
            <person name="Jauniaux N."/>
            <person name="Joyet P."/>
            <person name="Kachouri R."/>
            <person name="Kerrest A."/>
            <person name="Koszul R."/>
            <person name="Lemaire M."/>
            <person name="Lesur I."/>
            <person name="Ma L."/>
            <person name="Muller H."/>
            <person name="Nicaud J.-M."/>
            <person name="Nikolski M."/>
            <person name="Oztas S."/>
            <person name="Ozier-Kalogeropoulos O."/>
            <person name="Pellenz S."/>
            <person name="Potier S."/>
            <person name="Richard G.-F."/>
            <person name="Straub M.-L."/>
            <person name="Suleau A."/>
            <person name="Swennen D."/>
            <person name="Tekaia F."/>
            <person name="Wesolowski-Louvel M."/>
            <person name="Westhof E."/>
            <person name="Wirth B."/>
            <person name="Zeniou-Meyer M."/>
            <person name="Zivanovic Y."/>
            <person name="Bolotin-Fukuhara M."/>
            <person name="Thierry A."/>
            <person name="Bouchier C."/>
            <person name="Caudron B."/>
            <person name="Scarpelli C."/>
            <person name="Gaillardin C."/>
            <person name="Weissenbach J."/>
            <person name="Wincker P."/>
            <person name="Souciet J.-L."/>
        </authorList>
    </citation>
    <scope>NUCLEOTIDE SEQUENCE [LARGE SCALE GENOMIC DNA]</scope>
    <source>
        <strain>ATCC 8585 / CBS 2359 / DSM 70799 / NBRC 1267 / NRRL Y-1140 / WM37</strain>
    </source>
</reference>
<sequence length="218" mass="24223">MDAVNIEQIDQEITLNLQSIDSDLSYCFNKITKDIIPYVTRYGQTCEDITNSSSWLKEMFQQSANVQLVTDQAVESAGQVLEPRTSLFPEVENETDEFHTVDQYPALSQTGVSSAGAPTTKTGGSVKQDQFQDQDTDELTQDSAMEKQRKKRKVSLQIHQHFNSSSSSNSSMENDISANSSPIKTIPPETETGTETHNKIQGELAKPGTVIHFNSKRD</sequence>
<comment type="function">
    <text evidence="1">Component of the DASH complex that connects microtubules with kinetochores and couples microtubule depolymerisation to chromosome movement; it is involved in retrieving kinetochores to the spindle poles before their re-orientation on the spindle in early mitosis and allows microtubule depolymerization to pull chromosomes apart and resist detachment during anaphase. Kinetochores, consisting of a centromere-associated inner segment and a microtubule-contacting outer segment, play a crucial role in chromosome segregation by mediating the physical connection between centromeric DNA and microtubules. Kinetochores also serve as an input point for the spindle assembly checkpoint, which delays anaphase until all chromosomes have bioriented on the mitotic spindle.</text>
</comment>
<comment type="subunit">
    <text evidence="1 2">Component of the DASH complex consisting of ASK1, DAD1, DAD2, DAD3, DAD4, DAM1, DUO1, HSK3, SPC19 and SPC34, with a stoichiometry of one copy of each subunit per complex. Multiple DASH complexes oligomerize to form a ring that encircles spindle microtubules and organizes the rod-like NDC80 complexes of the outer kinetochore. DASH complex oligomerization strengthens microtubule attachments (By similarity). On cytoplasmic microtubules, DASH complexes appear to form patches instead of rings (By similarity).</text>
</comment>
<comment type="subcellular location">
    <subcellularLocation>
        <location evidence="1">Nucleus</location>
    </subcellularLocation>
    <subcellularLocation>
        <location evidence="1">Cytoplasm</location>
        <location evidence="1">Cytoskeleton</location>
        <location evidence="1">Spindle</location>
    </subcellularLocation>
    <subcellularLocation>
        <location evidence="1">Chromosome</location>
        <location evidence="1">Centromere</location>
        <location evidence="1">Kinetochore</location>
    </subcellularLocation>
</comment>
<comment type="similarity">
    <text evidence="4">Belongs to the DASH complex ASK1 family.</text>
</comment>